<reference key="1">
    <citation type="journal article" date="2011" name="MBio">
        <title>Novel metabolic attributes of the genus Cyanothece, comprising a group of unicellular nitrogen-fixing Cyanobacteria.</title>
        <authorList>
            <person name="Bandyopadhyay A."/>
            <person name="Elvitigala T."/>
            <person name="Welsh E."/>
            <person name="Stockel J."/>
            <person name="Liberton M."/>
            <person name="Min H."/>
            <person name="Sherman L.A."/>
            <person name="Pakrasi H.B."/>
        </authorList>
    </citation>
    <scope>NUCLEOTIDE SEQUENCE [LARGE SCALE GENOMIC DNA]</scope>
    <source>
        <strain>PCC 7425 / ATCC 29141</strain>
    </source>
</reference>
<comment type="function">
    <text evidence="1">The RecF protein is involved in DNA metabolism; it is required for DNA replication and normal SOS inducibility. RecF binds preferentially to single-stranded, linear DNA. It also seems to bind ATP.</text>
</comment>
<comment type="subcellular location">
    <subcellularLocation>
        <location evidence="1">Cytoplasm</location>
    </subcellularLocation>
</comment>
<comment type="similarity">
    <text evidence="1">Belongs to the RecF family.</text>
</comment>
<keyword id="KW-0067">ATP-binding</keyword>
<keyword id="KW-0963">Cytoplasm</keyword>
<keyword id="KW-0227">DNA damage</keyword>
<keyword id="KW-0234">DNA repair</keyword>
<keyword id="KW-0235">DNA replication</keyword>
<keyword id="KW-0238">DNA-binding</keyword>
<keyword id="KW-0547">Nucleotide-binding</keyword>
<keyword id="KW-0742">SOS response</keyword>
<gene>
    <name evidence="1" type="primary">recF</name>
    <name type="ordered locus">Cyan7425_2248</name>
</gene>
<evidence type="ECO:0000255" key="1">
    <source>
        <dbReference type="HAMAP-Rule" id="MF_00365"/>
    </source>
</evidence>
<name>RECF_CYAP4</name>
<sequence>MYLKSLQLRYFRNYREQVIDFAAPKTILVGQNAQGKSNLLEAVELLSTLRSHRSHRDRELVLSGQENGQIIATIERDSGPLDLTLNLRSNGRRTLMVNSEPVRRHLDFLGHLNAVEFSSLDLDLVRGTPAERRNWLDNVLIQLEPFYAHLLQQYNHVLRQRNAFLKSYQREGSLDHTELKLWDQQLASTGTRLTRRRQRLLVRLAPLATHWHQAISGKNEDLQVHYAPNVPLEGDEPEAIYQAFLEKLQQKAIAEQHQGTSLVGPHRDEVELIINQTPARQYGSQGQQRTLVLALKLAELKLIEEVIGEPPLLLLDDVLAELDLQRQNQLLETIQDRFQTLITTTHLGAFDAQWLKSAQILEVAGGVIFNSNHCDRR</sequence>
<organism>
    <name type="scientific">Cyanothece sp. (strain PCC 7425 / ATCC 29141)</name>
    <dbReference type="NCBI Taxonomy" id="395961"/>
    <lineage>
        <taxon>Bacteria</taxon>
        <taxon>Bacillati</taxon>
        <taxon>Cyanobacteriota</taxon>
        <taxon>Cyanophyceae</taxon>
        <taxon>Gomontiellales</taxon>
        <taxon>Cyanothecaceae</taxon>
        <taxon>Cyanothece</taxon>
    </lineage>
</organism>
<feature type="chain" id="PRO_1000133684" description="DNA replication and repair protein RecF">
    <location>
        <begin position="1"/>
        <end position="377"/>
    </location>
</feature>
<feature type="binding site" evidence="1">
    <location>
        <begin position="30"/>
        <end position="37"/>
    </location>
    <ligand>
        <name>ATP</name>
        <dbReference type="ChEBI" id="CHEBI:30616"/>
    </ligand>
</feature>
<proteinExistence type="inferred from homology"/>
<dbReference type="EMBL" id="CP001344">
    <property type="protein sequence ID" value="ACL44609.1"/>
    <property type="molecule type" value="Genomic_DNA"/>
</dbReference>
<dbReference type="SMR" id="B8HVF7"/>
<dbReference type="STRING" id="395961.Cyan7425_2248"/>
<dbReference type="KEGG" id="cyn:Cyan7425_2248"/>
<dbReference type="eggNOG" id="COG1195">
    <property type="taxonomic scope" value="Bacteria"/>
</dbReference>
<dbReference type="HOGENOM" id="CLU_040267_0_1_3"/>
<dbReference type="OrthoDB" id="9803889at2"/>
<dbReference type="GO" id="GO:0005737">
    <property type="term" value="C:cytoplasm"/>
    <property type="evidence" value="ECO:0007669"/>
    <property type="project" value="UniProtKB-SubCell"/>
</dbReference>
<dbReference type="GO" id="GO:0005524">
    <property type="term" value="F:ATP binding"/>
    <property type="evidence" value="ECO:0007669"/>
    <property type="project" value="UniProtKB-UniRule"/>
</dbReference>
<dbReference type="GO" id="GO:0003697">
    <property type="term" value="F:single-stranded DNA binding"/>
    <property type="evidence" value="ECO:0007669"/>
    <property type="project" value="UniProtKB-UniRule"/>
</dbReference>
<dbReference type="GO" id="GO:0006260">
    <property type="term" value="P:DNA replication"/>
    <property type="evidence" value="ECO:0007669"/>
    <property type="project" value="UniProtKB-UniRule"/>
</dbReference>
<dbReference type="GO" id="GO:0000731">
    <property type="term" value="P:DNA synthesis involved in DNA repair"/>
    <property type="evidence" value="ECO:0007669"/>
    <property type="project" value="TreeGrafter"/>
</dbReference>
<dbReference type="GO" id="GO:0006302">
    <property type="term" value="P:double-strand break repair"/>
    <property type="evidence" value="ECO:0007669"/>
    <property type="project" value="TreeGrafter"/>
</dbReference>
<dbReference type="GO" id="GO:0009432">
    <property type="term" value="P:SOS response"/>
    <property type="evidence" value="ECO:0007669"/>
    <property type="project" value="UniProtKB-UniRule"/>
</dbReference>
<dbReference type="CDD" id="cd03242">
    <property type="entry name" value="ABC_RecF"/>
    <property type="match status" value="1"/>
</dbReference>
<dbReference type="Gene3D" id="3.40.50.300">
    <property type="entry name" value="P-loop containing nucleotide triphosphate hydrolases"/>
    <property type="match status" value="1"/>
</dbReference>
<dbReference type="Gene3D" id="1.20.1050.90">
    <property type="entry name" value="RecF/RecN/SMC, N-terminal domain"/>
    <property type="match status" value="1"/>
</dbReference>
<dbReference type="HAMAP" id="MF_00365">
    <property type="entry name" value="RecF"/>
    <property type="match status" value="1"/>
</dbReference>
<dbReference type="InterPro" id="IPR001238">
    <property type="entry name" value="DNA-binding_RecF"/>
</dbReference>
<dbReference type="InterPro" id="IPR018078">
    <property type="entry name" value="DNA-binding_RecF_CS"/>
</dbReference>
<dbReference type="InterPro" id="IPR027417">
    <property type="entry name" value="P-loop_NTPase"/>
</dbReference>
<dbReference type="InterPro" id="IPR003395">
    <property type="entry name" value="RecF/RecN/SMC_N"/>
</dbReference>
<dbReference type="InterPro" id="IPR042174">
    <property type="entry name" value="RecF_2"/>
</dbReference>
<dbReference type="NCBIfam" id="TIGR00611">
    <property type="entry name" value="recf"/>
    <property type="match status" value="1"/>
</dbReference>
<dbReference type="PANTHER" id="PTHR32182">
    <property type="entry name" value="DNA REPLICATION AND REPAIR PROTEIN RECF"/>
    <property type="match status" value="1"/>
</dbReference>
<dbReference type="PANTHER" id="PTHR32182:SF0">
    <property type="entry name" value="DNA REPLICATION AND REPAIR PROTEIN RECF"/>
    <property type="match status" value="1"/>
</dbReference>
<dbReference type="Pfam" id="PF02463">
    <property type="entry name" value="SMC_N"/>
    <property type="match status" value="1"/>
</dbReference>
<dbReference type="SUPFAM" id="SSF52540">
    <property type="entry name" value="P-loop containing nucleoside triphosphate hydrolases"/>
    <property type="match status" value="1"/>
</dbReference>
<dbReference type="PROSITE" id="PS00617">
    <property type="entry name" value="RECF_1"/>
    <property type="match status" value="1"/>
</dbReference>
<dbReference type="PROSITE" id="PS00618">
    <property type="entry name" value="RECF_2"/>
    <property type="match status" value="1"/>
</dbReference>
<protein>
    <recommendedName>
        <fullName evidence="1">DNA replication and repair protein RecF</fullName>
    </recommendedName>
</protein>
<accession>B8HVF7</accession>